<proteinExistence type="inferred from homology"/>
<feature type="chain" id="PRO_0000154524" description="Anthranilate phosphoribosyltransferase">
    <location>
        <begin position="1"/>
        <end position="345"/>
    </location>
</feature>
<feature type="binding site" evidence="1">
    <location>
        <position position="79"/>
    </location>
    <ligand>
        <name>5-phospho-alpha-D-ribose 1-diphosphate</name>
        <dbReference type="ChEBI" id="CHEBI:58017"/>
    </ligand>
</feature>
<feature type="binding site" evidence="1">
    <location>
        <position position="79"/>
    </location>
    <ligand>
        <name>anthranilate</name>
        <dbReference type="ChEBI" id="CHEBI:16567"/>
        <label>1</label>
    </ligand>
</feature>
<feature type="binding site" evidence="1">
    <location>
        <begin position="82"/>
        <end position="83"/>
    </location>
    <ligand>
        <name>5-phospho-alpha-D-ribose 1-diphosphate</name>
        <dbReference type="ChEBI" id="CHEBI:58017"/>
    </ligand>
</feature>
<feature type="binding site" evidence="1">
    <location>
        <position position="87"/>
    </location>
    <ligand>
        <name>5-phospho-alpha-D-ribose 1-diphosphate</name>
        <dbReference type="ChEBI" id="CHEBI:58017"/>
    </ligand>
</feature>
<feature type="binding site" evidence="1">
    <location>
        <begin position="89"/>
        <end position="92"/>
    </location>
    <ligand>
        <name>5-phospho-alpha-D-ribose 1-diphosphate</name>
        <dbReference type="ChEBI" id="CHEBI:58017"/>
    </ligand>
</feature>
<feature type="binding site" evidence="1">
    <location>
        <position position="91"/>
    </location>
    <ligand>
        <name>Mg(2+)</name>
        <dbReference type="ChEBI" id="CHEBI:18420"/>
        <label>1</label>
    </ligand>
</feature>
<feature type="binding site" evidence="1">
    <location>
        <begin position="106"/>
        <end position="114"/>
    </location>
    <ligand>
        <name>5-phospho-alpha-D-ribose 1-diphosphate</name>
        <dbReference type="ChEBI" id="CHEBI:58017"/>
    </ligand>
</feature>
<feature type="binding site" evidence="1">
    <location>
        <position position="109"/>
    </location>
    <ligand>
        <name>anthranilate</name>
        <dbReference type="ChEBI" id="CHEBI:16567"/>
        <label>1</label>
    </ligand>
</feature>
<feature type="binding site" evidence="1">
    <location>
        <position position="118"/>
    </location>
    <ligand>
        <name>5-phospho-alpha-D-ribose 1-diphosphate</name>
        <dbReference type="ChEBI" id="CHEBI:58017"/>
    </ligand>
</feature>
<feature type="binding site" evidence="1">
    <location>
        <position position="164"/>
    </location>
    <ligand>
        <name>anthranilate</name>
        <dbReference type="ChEBI" id="CHEBI:16567"/>
        <label>2</label>
    </ligand>
</feature>
<feature type="binding site" evidence="1">
    <location>
        <position position="223"/>
    </location>
    <ligand>
        <name>Mg(2+)</name>
        <dbReference type="ChEBI" id="CHEBI:18420"/>
        <label>2</label>
    </ligand>
</feature>
<feature type="binding site" evidence="1">
    <location>
        <position position="224"/>
    </location>
    <ligand>
        <name>Mg(2+)</name>
        <dbReference type="ChEBI" id="CHEBI:18420"/>
        <label>1</label>
    </ligand>
</feature>
<feature type="binding site" evidence="1">
    <location>
        <position position="224"/>
    </location>
    <ligand>
        <name>Mg(2+)</name>
        <dbReference type="ChEBI" id="CHEBI:18420"/>
        <label>2</label>
    </ligand>
</feature>
<dbReference type="EC" id="2.4.2.18" evidence="1"/>
<dbReference type="EMBL" id="BA000023">
    <property type="protein sequence ID" value="BAB66272.1"/>
    <property type="molecule type" value="Genomic_DNA"/>
</dbReference>
<dbReference type="RefSeq" id="WP_010979250.1">
    <property type="nucleotide sequence ID" value="NC_003106.2"/>
</dbReference>
<dbReference type="SMR" id="Q971Z7"/>
<dbReference type="STRING" id="273063.STK_12310"/>
<dbReference type="GeneID" id="95642527"/>
<dbReference type="KEGG" id="sto:STK_12310"/>
<dbReference type="PATRIC" id="fig|273063.9.peg.1390"/>
<dbReference type="eggNOG" id="arCOG02012">
    <property type="taxonomic scope" value="Archaea"/>
</dbReference>
<dbReference type="OrthoDB" id="8214at2157"/>
<dbReference type="UniPathway" id="UPA00035">
    <property type="reaction ID" value="UER00041"/>
</dbReference>
<dbReference type="Proteomes" id="UP000001015">
    <property type="component" value="Chromosome"/>
</dbReference>
<dbReference type="GO" id="GO:0005829">
    <property type="term" value="C:cytosol"/>
    <property type="evidence" value="ECO:0007669"/>
    <property type="project" value="TreeGrafter"/>
</dbReference>
<dbReference type="GO" id="GO:0004048">
    <property type="term" value="F:anthranilate phosphoribosyltransferase activity"/>
    <property type="evidence" value="ECO:0007669"/>
    <property type="project" value="UniProtKB-UniRule"/>
</dbReference>
<dbReference type="GO" id="GO:0000287">
    <property type="term" value="F:magnesium ion binding"/>
    <property type="evidence" value="ECO:0007669"/>
    <property type="project" value="UniProtKB-UniRule"/>
</dbReference>
<dbReference type="GO" id="GO:0000162">
    <property type="term" value="P:L-tryptophan biosynthetic process"/>
    <property type="evidence" value="ECO:0007669"/>
    <property type="project" value="UniProtKB-UniRule"/>
</dbReference>
<dbReference type="Gene3D" id="3.40.1030.10">
    <property type="entry name" value="Nucleoside phosphorylase/phosphoribosyltransferase catalytic domain"/>
    <property type="match status" value="1"/>
</dbReference>
<dbReference type="Gene3D" id="1.20.970.10">
    <property type="entry name" value="Transferase, Pyrimidine Nucleoside Phosphorylase, Chain C"/>
    <property type="match status" value="1"/>
</dbReference>
<dbReference type="HAMAP" id="MF_00211">
    <property type="entry name" value="TrpD"/>
    <property type="match status" value="1"/>
</dbReference>
<dbReference type="InterPro" id="IPR005940">
    <property type="entry name" value="Anthranilate_Pribosyl_Tfrase"/>
</dbReference>
<dbReference type="InterPro" id="IPR000312">
    <property type="entry name" value="Glycosyl_Trfase_fam3"/>
</dbReference>
<dbReference type="InterPro" id="IPR017459">
    <property type="entry name" value="Glycosyl_Trfase_fam3_N_dom"/>
</dbReference>
<dbReference type="InterPro" id="IPR036320">
    <property type="entry name" value="Glycosyl_Trfase_fam3_N_dom_sf"/>
</dbReference>
<dbReference type="InterPro" id="IPR035902">
    <property type="entry name" value="Nuc_phospho_transferase"/>
</dbReference>
<dbReference type="NCBIfam" id="TIGR01245">
    <property type="entry name" value="trpD"/>
    <property type="match status" value="1"/>
</dbReference>
<dbReference type="PANTHER" id="PTHR43285">
    <property type="entry name" value="ANTHRANILATE PHOSPHORIBOSYLTRANSFERASE"/>
    <property type="match status" value="1"/>
</dbReference>
<dbReference type="PANTHER" id="PTHR43285:SF2">
    <property type="entry name" value="ANTHRANILATE PHOSPHORIBOSYLTRANSFERASE"/>
    <property type="match status" value="1"/>
</dbReference>
<dbReference type="Pfam" id="PF02885">
    <property type="entry name" value="Glycos_trans_3N"/>
    <property type="match status" value="1"/>
</dbReference>
<dbReference type="Pfam" id="PF00591">
    <property type="entry name" value="Glycos_transf_3"/>
    <property type="match status" value="1"/>
</dbReference>
<dbReference type="SUPFAM" id="SSF52418">
    <property type="entry name" value="Nucleoside phosphorylase/phosphoribosyltransferase catalytic domain"/>
    <property type="match status" value="1"/>
</dbReference>
<dbReference type="SUPFAM" id="SSF47648">
    <property type="entry name" value="Nucleoside phosphorylase/phosphoribosyltransferase N-terminal domain"/>
    <property type="match status" value="1"/>
</dbReference>
<evidence type="ECO:0000255" key="1">
    <source>
        <dbReference type="HAMAP-Rule" id="MF_00211"/>
    </source>
</evidence>
<name>TRPD_SULTO</name>
<protein>
    <recommendedName>
        <fullName evidence="1">Anthranilate phosphoribosyltransferase</fullName>
        <ecNumber evidence="1">2.4.2.18</ecNumber>
    </recommendedName>
</protein>
<comment type="function">
    <text evidence="1">Catalyzes the transfer of the phosphoribosyl group of 5-phosphorylribose-1-pyrophosphate (PRPP) to anthranilate to yield N-(5'-phosphoribosyl)-anthranilate (PRA).</text>
</comment>
<comment type="catalytic activity">
    <reaction evidence="1">
        <text>N-(5-phospho-beta-D-ribosyl)anthranilate + diphosphate = 5-phospho-alpha-D-ribose 1-diphosphate + anthranilate</text>
        <dbReference type="Rhea" id="RHEA:11768"/>
        <dbReference type="ChEBI" id="CHEBI:16567"/>
        <dbReference type="ChEBI" id="CHEBI:18277"/>
        <dbReference type="ChEBI" id="CHEBI:33019"/>
        <dbReference type="ChEBI" id="CHEBI:58017"/>
        <dbReference type="EC" id="2.4.2.18"/>
    </reaction>
</comment>
<comment type="cofactor">
    <cofactor evidence="1">
        <name>Mg(2+)</name>
        <dbReference type="ChEBI" id="CHEBI:18420"/>
    </cofactor>
    <text evidence="1">Binds 2 magnesium ions per monomer.</text>
</comment>
<comment type="pathway">
    <text evidence="1">Amino-acid biosynthesis; L-tryptophan biosynthesis; L-tryptophan from chorismate: step 2/5.</text>
</comment>
<comment type="subunit">
    <text evidence="1">Homodimer.</text>
</comment>
<comment type="similarity">
    <text evidence="1">Belongs to the anthranilate phosphoribosyltransferase family.</text>
</comment>
<keyword id="KW-0028">Amino-acid biosynthesis</keyword>
<keyword id="KW-0057">Aromatic amino acid biosynthesis</keyword>
<keyword id="KW-0328">Glycosyltransferase</keyword>
<keyword id="KW-0460">Magnesium</keyword>
<keyword id="KW-0479">Metal-binding</keyword>
<keyword id="KW-1185">Reference proteome</keyword>
<keyword id="KW-0808">Transferase</keyword>
<keyword id="KW-0822">Tryptophan biosynthesis</keyword>
<organism>
    <name type="scientific">Sulfurisphaera tokodaii (strain DSM 16993 / JCM 10545 / NBRC 100140 / 7)</name>
    <name type="common">Sulfolobus tokodaii</name>
    <dbReference type="NCBI Taxonomy" id="273063"/>
    <lineage>
        <taxon>Archaea</taxon>
        <taxon>Thermoproteota</taxon>
        <taxon>Thermoprotei</taxon>
        <taxon>Sulfolobales</taxon>
        <taxon>Sulfolobaceae</taxon>
        <taxon>Sulfurisphaera</taxon>
    </lineage>
</organism>
<gene>
    <name evidence="1" type="primary">trpD</name>
    <name type="ordered locus">STK_12310</name>
</gene>
<reference key="1">
    <citation type="journal article" date="2001" name="DNA Res.">
        <title>Complete genome sequence of an aerobic thermoacidophilic Crenarchaeon, Sulfolobus tokodaii strain7.</title>
        <authorList>
            <person name="Kawarabayasi Y."/>
            <person name="Hino Y."/>
            <person name="Horikawa H."/>
            <person name="Jin-no K."/>
            <person name="Takahashi M."/>
            <person name="Sekine M."/>
            <person name="Baba S."/>
            <person name="Ankai A."/>
            <person name="Kosugi H."/>
            <person name="Hosoyama A."/>
            <person name="Fukui S."/>
            <person name="Nagai Y."/>
            <person name="Nishijima K."/>
            <person name="Otsuka R."/>
            <person name="Nakazawa H."/>
            <person name="Takamiya M."/>
            <person name="Kato Y."/>
            <person name="Yoshizawa T."/>
            <person name="Tanaka T."/>
            <person name="Kudoh Y."/>
            <person name="Yamazaki J."/>
            <person name="Kushida N."/>
            <person name="Oguchi A."/>
            <person name="Aoki K."/>
            <person name="Masuda S."/>
            <person name="Yanagii M."/>
            <person name="Nishimura M."/>
            <person name="Yamagishi A."/>
            <person name="Oshima T."/>
            <person name="Kikuchi H."/>
        </authorList>
    </citation>
    <scope>NUCLEOTIDE SEQUENCE [LARGE SCALE GENOMIC DNA]</scope>
    <source>
        <strain>DSM 16993 / JCM 10545 / NBRC 100140 / 7</strain>
    </source>
</reference>
<sequence length="345" mass="38028">MNTAELLRKIIRRENLTEDEARSIANSVMKAEVPEIVTAGFLVGLATKGESVEEITGFAKAMRDNALHINFPSALDTAGTGGDGLNTLNVSTAVALLISQVYPVAKHGNRAVSGKSGSADVLEALGYNIIVKPELAEKLIKESKFVFLFAQLYHPAMKNVANVRKTLGVRTIFNVLGPLTNPANARYQMIGVFSKEFLPKLAEAVVRLDYDRVILYNGFPSLDEISTQGITYVYEIEKDKIVSYTVSINDFGLKDEIPVSKLTVNDATHSALRILKAFKGKDEEARRFIGINTAMALYLIRKVKDLKDGYEYALQLMDSGIPHVRSLIEKNGDLSNFNKLVEKID</sequence>
<accession>Q971Z7</accession>